<feature type="chain" id="PRO_0000105600" description="Probable cat1 operon transcriptional activator">
    <location>
        <begin position="1"/>
        <end position="303"/>
    </location>
</feature>
<feature type="domain" description="HTH lysR-type" evidence="1">
    <location>
        <begin position="1"/>
        <end position="58"/>
    </location>
</feature>
<feature type="DNA-binding region" description="H-T-H motif" evidence="1">
    <location>
        <begin position="18"/>
        <end position="37"/>
    </location>
</feature>
<sequence length="303" mass="34267">MDLRQFRYFVAVARERNFTRAARQLNIAQPPLSRQIQLLEEEVGVPLLIRNSRPVQLTDAGRLFFEQAIQVLGRVEQMQAATRRVGLHQRSVLSIGFVASTLYGVLPTLMRKLRQHAPELDIQMVELMSVQQIQAINEGRIDIGFGRVHHSDPNVSSIVLHEERLAVALPMESPMARESTPLPVHQLAGEKLIVYPKEPRPGFADQVLNILDRHDVQPGQVMEVREIQTALGLVAAEFGVCVIPASARQMRHDVHYRLIDGDRATSPVIVSHRANDSSKYISLTKQLIREMYAEHPAWLDTHN</sequence>
<accession>O33945</accession>
<name>CATR_ACILW</name>
<dbReference type="EMBL" id="U77658">
    <property type="protein sequence ID" value="AAC46229.1"/>
    <property type="molecule type" value="Genomic_DNA"/>
</dbReference>
<dbReference type="PIR" id="JC5946">
    <property type="entry name" value="JC5946"/>
</dbReference>
<dbReference type="SMR" id="O33945"/>
<dbReference type="GO" id="GO:0032993">
    <property type="term" value="C:protein-DNA complex"/>
    <property type="evidence" value="ECO:0007669"/>
    <property type="project" value="TreeGrafter"/>
</dbReference>
<dbReference type="GO" id="GO:0003677">
    <property type="term" value="F:DNA binding"/>
    <property type="evidence" value="ECO:0007669"/>
    <property type="project" value="UniProtKB-KW"/>
</dbReference>
<dbReference type="GO" id="GO:0003700">
    <property type="term" value="F:DNA-binding transcription factor activity"/>
    <property type="evidence" value="ECO:0007669"/>
    <property type="project" value="InterPro"/>
</dbReference>
<dbReference type="GO" id="GO:0009056">
    <property type="term" value="P:catabolic process"/>
    <property type="evidence" value="ECO:0007669"/>
    <property type="project" value="UniProtKB-KW"/>
</dbReference>
<dbReference type="CDD" id="cd08445">
    <property type="entry name" value="PBP2_BenM_CatM_CatR"/>
    <property type="match status" value="1"/>
</dbReference>
<dbReference type="FunFam" id="1.10.10.10:FF:000001">
    <property type="entry name" value="LysR family transcriptional regulator"/>
    <property type="match status" value="1"/>
</dbReference>
<dbReference type="Gene3D" id="3.40.190.10">
    <property type="entry name" value="Periplasmic binding protein-like II"/>
    <property type="match status" value="2"/>
</dbReference>
<dbReference type="Gene3D" id="1.10.10.10">
    <property type="entry name" value="Winged helix-like DNA-binding domain superfamily/Winged helix DNA-binding domain"/>
    <property type="match status" value="1"/>
</dbReference>
<dbReference type="InterPro" id="IPR005119">
    <property type="entry name" value="LysR_subst-bd"/>
</dbReference>
<dbReference type="InterPro" id="IPR000847">
    <property type="entry name" value="Tscrpt_reg_HTH_LysR"/>
</dbReference>
<dbReference type="InterPro" id="IPR036388">
    <property type="entry name" value="WH-like_DNA-bd_sf"/>
</dbReference>
<dbReference type="InterPro" id="IPR036390">
    <property type="entry name" value="WH_DNA-bd_sf"/>
</dbReference>
<dbReference type="PANTHER" id="PTHR30346:SF17">
    <property type="entry name" value="LYSR FAMILY TRANSCRIPTIONAL REGULATOR"/>
    <property type="match status" value="1"/>
</dbReference>
<dbReference type="PANTHER" id="PTHR30346">
    <property type="entry name" value="TRANSCRIPTIONAL DUAL REGULATOR HCAR-RELATED"/>
    <property type="match status" value="1"/>
</dbReference>
<dbReference type="Pfam" id="PF00126">
    <property type="entry name" value="HTH_1"/>
    <property type="match status" value="1"/>
</dbReference>
<dbReference type="Pfam" id="PF03466">
    <property type="entry name" value="LysR_substrate"/>
    <property type="match status" value="1"/>
</dbReference>
<dbReference type="PRINTS" id="PR00039">
    <property type="entry name" value="HTHLYSR"/>
</dbReference>
<dbReference type="SUPFAM" id="SSF53850">
    <property type="entry name" value="Periplasmic binding protein-like II"/>
    <property type="match status" value="1"/>
</dbReference>
<dbReference type="SUPFAM" id="SSF46785">
    <property type="entry name" value="Winged helix' DNA-binding domain"/>
    <property type="match status" value="1"/>
</dbReference>
<dbReference type="PROSITE" id="PS50931">
    <property type="entry name" value="HTH_LYSR"/>
    <property type="match status" value="1"/>
</dbReference>
<protein>
    <recommendedName>
        <fullName>Probable cat1 operon transcriptional activator</fullName>
    </recommendedName>
    <alternativeName>
        <fullName>ORFR1</fullName>
    </alternativeName>
</protein>
<proteinExistence type="inferred from homology"/>
<evidence type="ECO:0000255" key="1">
    <source>
        <dbReference type="PROSITE-ProRule" id="PRU00253"/>
    </source>
</evidence>
<evidence type="ECO:0000305" key="2"/>
<comment type="function">
    <text>Probable positive regulator of the cat1 operon which encode enzymes responsible for the degradation of catechol to acetyl-CoA via the beta-ketoadipate pathway.</text>
</comment>
<comment type="similarity">
    <text evidence="2">Belongs to the LysR transcriptional regulatory family.</text>
</comment>
<reference key="1">
    <citation type="journal article" date="1998" name="Biochem. Biophys. Res. Commun.">
        <title>Organization and transcriptional characterization of the cat1 gene cluster in Acinetobacter lwoffi K24.</title>
        <authorList>
            <person name="Kim S.I."/>
            <person name="Leem S.-H."/>
            <person name="Choi J.-S."/>
            <person name="Ha K.-S."/>
        </authorList>
    </citation>
    <scope>NUCLEOTIDE SEQUENCE [GENOMIC DNA]</scope>
    <source>
        <strain>K24</strain>
    </source>
</reference>
<keyword id="KW-0010">Activator</keyword>
<keyword id="KW-0058">Aromatic hydrocarbons catabolism</keyword>
<keyword id="KW-0238">DNA-binding</keyword>
<keyword id="KW-0804">Transcription</keyword>
<keyword id="KW-0805">Transcription regulation</keyword>
<organism>
    <name type="scientific">Acinetobacter lwoffii</name>
    <dbReference type="NCBI Taxonomy" id="28090"/>
    <lineage>
        <taxon>Bacteria</taxon>
        <taxon>Pseudomonadati</taxon>
        <taxon>Pseudomonadota</taxon>
        <taxon>Gammaproteobacteria</taxon>
        <taxon>Moraxellales</taxon>
        <taxon>Moraxellaceae</taxon>
        <taxon>Acinetobacter</taxon>
    </lineage>
</organism>